<name>TRPF_SYNJB</name>
<reference key="1">
    <citation type="journal article" date="2007" name="ISME J.">
        <title>Population level functional diversity in a microbial community revealed by comparative genomic and metagenomic analyses.</title>
        <authorList>
            <person name="Bhaya D."/>
            <person name="Grossman A.R."/>
            <person name="Steunou A.-S."/>
            <person name="Khuri N."/>
            <person name="Cohan F.M."/>
            <person name="Hamamura N."/>
            <person name="Melendrez M.C."/>
            <person name="Bateson M.M."/>
            <person name="Ward D.M."/>
            <person name="Heidelberg J.F."/>
        </authorList>
    </citation>
    <scope>NUCLEOTIDE SEQUENCE [LARGE SCALE GENOMIC DNA]</scope>
    <source>
        <strain>JA-2-3B'a(2-13)</strain>
    </source>
</reference>
<protein>
    <recommendedName>
        <fullName evidence="1">N-(5'-phosphoribosyl)anthranilate isomerase</fullName>
        <shortName evidence="1">PRAI</shortName>
        <ecNumber evidence="1">5.3.1.24</ecNumber>
    </recommendedName>
</protein>
<sequence>MGRLFVKICGITRQDQAEAIAALGVSALGFIAVPNTPRYLPLSEMARWVGSLPGPVEKVGVFLDQDPRAIAAWVETVGLTAVQLHGQESPQDCQQLGEWLPGIRRIKALRVRQPQDLEVANLYRDCVEMLLLDAYHPQQAGGTGRTLNWPELARLSRERALPLPWLLAGGLNPDNVLQALSHLQPSGIDLSSGVERRPGDKDIDKVRHLLQQLGSQGWEIAPTLPPITPSATG</sequence>
<organism>
    <name type="scientific">Synechococcus sp. (strain JA-2-3B'a(2-13))</name>
    <name type="common">Cyanobacteria bacterium Yellowstone B-Prime</name>
    <dbReference type="NCBI Taxonomy" id="321332"/>
    <lineage>
        <taxon>Bacteria</taxon>
        <taxon>Bacillati</taxon>
        <taxon>Cyanobacteriota</taxon>
        <taxon>Cyanophyceae</taxon>
        <taxon>Synechococcales</taxon>
        <taxon>Synechococcaceae</taxon>
        <taxon>Synechococcus</taxon>
    </lineage>
</organism>
<evidence type="ECO:0000255" key="1">
    <source>
        <dbReference type="HAMAP-Rule" id="MF_00135"/>
    </source>
</evidence>
<feature type="chain" id="PRO_1000018643" description="N-(5'-phosphoribosyl)anthranilate isomerase">
    <location>
        <begin position="1"/>
        <end position="233"/>
    </location>
</feature>
<gene>
    <name evidence="1" type="primary">trpF</name>
    <name type="ordered locus">CYB_0194</name>
</gene>
<proteinExistence type="inferred from homology"/>
<keyword id="KW-0028">Amino-acid biosynthesis</keyword>
<keyword id="KW-0057">Aromatic amino acid biosynthesis</keyword>
<keyword id="KW-0413">Isomerase</keyword>
<keyword id="KW-1185">Reference proteome</keyword>
<keyword id="KW-0822">Tryptophan biosynthesis</keyword>
<accession>Q2JPT2</accession>
<comment type="catalytic activity">
    <reaction evidence="1">
        <text>N-(5-phospho-beta-D-ribosyl)anthranilate = 1-(2-carboxyphenylamino)-1-deoxy-D-ribulose 5-phosphate</text>
        <dbReference type="Rhea" id="RHEA:21540"/>
        <dbReference type="ChEBI" id="CHEBI:18277"/>
        <dbReference type="ChEBI" id="CHEBI:58613"/>
        <dbReference type="EC" id="5.3.1.24"/>
    </reaction>
</comment>
<comment type="pathway">
    <text evidence="1">Amino-acid biosynthesis; L-tryptophan biosynthesis; L-tryptophan from chorismate: step 3/5.</text>
</comment>
<comment type="similarity">
    <text evidence="1">Belongs to the TrpF family.</text>
</comment>
<dbReference type="EC" id="5.3.1.24" evidence="1"/>
<dbReference type="EMBL" id="CP000240">
    <property type="protein sequence ID" value="ABD01194.1"/>
    <property type="molecule type" value="Genomic_DNA"/>
</dbReference>
<dbReference type="RefSeq" id="WP_011431865.1">
    <property type="nucleotide sequence ID" value="NC_007776.1"/>
</dbReference>
<dbReference type="SMR" id="Q2JPT2"/>
<dbReference type="STRING" id="321332.CYB_0194"/>
<dbReference type="KEGG" id="cyb:CYB_0194"/>
<dbReference type="eggNOG" id="COG0135">
    <property type="taxonomic scope" value="Bacteria"/>
</dbReference>
<dbReference type="HOGENOM" id="CLU_076364_1_1_3"/>
<dbReference type="OrthoDB" id="9786954at2"/>
<dbReference type="UniPathway" id="UPA00035">
    <property type="reaction ID" value="UER00042"/>
</dbReference>
<dbReference type="Proteomes" id="UP000001938">
    <property type="component" value="Chromosome"/>
</dbReference>
<dbReference type="GO" id="GO:0004640">
    <property type="term" value="F:phosphoribosylanthranilate isomerase activity"/>
    <property type="evidence" value="ECO:0007669"/>
    <property type="project" value="UniProtKB-UniRule"/>
</dbReference>
<dbReference type="GO" id="GO:0000162">
    <property type="term" value="P:L-tryptophan biosynthetic process"/>
    <property type="evidence" value="ECO:0007669"/>
    <property type="project" value="UniProtKB-UniRule"/>
</dbReference>
<dbReference type="CDD" id="cd00405">
    <property type="entry name" value="PRAI"/>
    <property type="match status" value="1"/>
</dbReference>
<dbReference type="Gene3D" id="3.20.20.70">
    <property type="entry name" value="Aldolase class I"/>
    <property type="match status" value="1"/>
</dbReference>
<dbReference type="HAMAP" id="MF_00135">
    <property type="entry name" value="PRAI"/>
    <property type="match status" value="1"/>
</dbReference>
<dbReference type="InterPro" id="IPR013785">
    <property type="entry name" value="Aldolase_TIM"/>
</dbReference>
<dbReference type="InterPro" id="IPR001240">
    <property type="entry name" value="PRAI_dom"/>
</dbReference>
<dbReference type="InterPro" id="IPR011060">
    <property type="entry name" value="RibuloseP-bd_barrel"/>
</dbReference>
<dbReference type="InterPro" id="IPR044643">
    <property type="entry name" value="TrpF_fam"/>
</dbReference>
<dbReference type="NCBIfam" id="NF002298">
    <property type="entry name" value="PRK01222.1-4"/>
    <property type="match status" value="1"/>
</dbReference>
<dbReference type="PANTHER" id="PTHR42894">
    <property type="entry name" value="N-(5'-PHOSPHORIBOSYL)ANTHRANILATE ISOMERASE"/>
    <property type="match status" value="1"/>
</dbReference>
<dbReference type="PANTHER" id="PTHR42894:SF1">
    <property type="entry name" value="N-(5'-PHOSPHORIBOSYL)ANTHRANILATE ISOMERASE"/>
    <property type="match status" value="1"/>
</dbReference>
<dbReference type="Pfam" id="PF00697">
    <property type="entry name" value="PRAI"/>
    <property type="match status" value="1"/>
</dbReference>
<dbReference type="SUPFAM" id="SSF51366">
    <property type="entry name" value="Ribulose-phoshate binding barrel"/>
    <property type="match status" value="1"/>
</dbReference>